<protein>
    <recommendedName>
        <fullName evidence="2">23S rRNA (uracil(1939)-C(5))-methyltransferase RlmD</fullName>
        <ecNumber evidence="2">2.1.1.190</ecNumber>
    </recommendedName>
    <alternativeName>
        <fullName evidence="2">23S rRNA(m5U1939)-methyltransferase</fullName>
    </alternativeName>
</protein>
<gene>
    <name evidence="2" type="primary">rlmD</name>
    <name type="synonym">rumA</name>
    <name type="ordered locus">SF2798</name>
    <name type="ordered locus">S2992</name>
</gene>
<keyword id="KW-0004">4Fe-4S</keyword>
<keyword id="KW-0408">Iron</keyword>
<keyword id="KW-0411">Iron-sulfur</keyword>
<keyword id="KW-0479">Metal-binding</keyword>
<keyword id="KW-0489">Methyltransferase</keyword>
<keyword id="KW-1185">Reference proteome</keyword>
<keyword id="KW-0698">rRNA processing</keyword>
<keyword id="KW-0949">S-adenosyl-L-methionine</keyword>
<keyword id="KW-0808">Transferase</keyword>
<reference key="1">
    <citation type="journal article" date="2002" name="Nucleic Acids Res.">
        <title>Genome sequence of Shigella flexneri 2a: insights into pathogenicity through comparison with genomes of Escherichia coli K12 and O157.</title>
        <authorList>
            <person name="Jin Q."/>
            <person name="Yuan Z."/>
            <person name="Xu J."/>
            <person name="Wang Y."/>
            <person name="Shen Y."/>
            <person name="Lu W."/>
            <person name="Wang J."/>
            <person name="Liu H."/>
            <person name="Yang J."/>
            <person name="Yang F."/>
            <person name="Zhang X."/>
            <person name="Zhang J."/>
            <person name="Yang G."/>
            <person name="Wu H."/>
            <person name="Qu D."/>
            <person name="Dong J."/>
            <person name="Sun L."/>
            <person name="Xue Y."/>
            <person name="Zhao A."/>
            <person name="Gao Y."/>
            <person name="Zhu J."/>
            <person name="Kan B."/>
            <person name="Ding K."/>
            <person name="Chen S."/>
            <person name="Cheng H."/>
            <person name="Yao Z."/>
            <person name="He B."/>
            <person name="Chen R."/>
            <person name="Ma D."/>
            <person name="Qiang B."/>
            <person name="Wen Y."/>
            <person name="Hou Y."/>
            <person name="Yu J."/>
        </authorList>
    </citation>
    <scope>NUCLEOTIDE SEQUENCE [LARGE SCALE GENOMIC DNA]</scope>
    <source>
        <strain>301 / Serotype 2a</strain>
    </source>
</reference>
<reference key="2">
    <citation type="journal article" date="2003" name="Infect. Immun.">
        <title>Complete genome sequence and comparative genomics of Shigella flexneri serotype 2a strain 2457T.</title>
        <authorList>
            <person name="Wei J."/>
            <person name="Goldberg M.B."/>
            <person name="Burland V."/>
            <person name="Venkatesan M.M."/>
            <person name="Deng W."/>
            <person name="Fournier G."/>
            <person name="Mayhew G.F."/>
            <person name="Plunkett G. III"/>
            <person name="Rose D.J."/>
            <person name="Darling A."/>
            <person name="Mau B."/>
            <person name="Perna N.T."/>
            <person name="Payne S.M."/>
            <person name="Runyen-Janecky L.J."/>
            <person name="Zhou S."/>
            <person name="Schwartz D.C."/>
            <person name="Blattner F.R."/>
        </authorList>
    </citation>
    <scope>NUCLEOTIDE SEQUENCE [LARGE SCALE GENOMIC DNA]</scope>
    <source>
        <strain>ATCC 700930 / 2457T / Serotype 2a</strain>
    </source>
</reference>
<organism>
    <name type="scientific">Shigella flexneri</name>
    <dbReference type="NCBI Taxonomy" id="623"/>
    <lineage>
        <taxon>Bacteria</taxon>
        <taxon>Pseudomonadati</taxon>
        <taxon>Pseudomonadota</taxon>
        <taxon>Gammaproteobacteria</taxon>
        <taxon>Enterobacterales</taxon>
        <taxon>Enterobacteriaceae</taxon>
        <taxon>Shigella</taxon>
    </lineage>
</organism>
<dbReference type="EC" id="2.1.1.190" evidence="2"/>
<dbReference type="EMBL" id="AE005674">
    <property type="protein sequence ID" value="AAN44286.1"/>
    <property type="molecule type" value="Genomic_DNA"/>
</dbReference>
<dbReference type="EMBL" id="AE014073">
    <property type="protein sequence ID" value="AAP18111.1"/>
    <property type="molecule type" value="Genomic_DNA"/>
</dbReference>
<dbReference type="RefSeq" id="NP_708579.1">
    <property type="nucleotide sequence ID" value="NC_004337.2"/>
</dbReference>
<dbReference type="RefSeq" id="WP_000046798.1">
    <property type="nucleotide sequence ID" value="NZ_WPGW01000063.1"/>
</dbReference>
<dbReference type="SMR" id="Q83QD5"/>
<dbReference type="STRING" id="198214.SF2798"/>
<dbReference type="PaxDb" id="198214-SF2798"/>
<dbReference type="GeneID" id="1025761"/>
<dbReference type="KEGG" id="sfl:SF2798"/>
<dbReference type="KEGG" id="sfx:S2992"/>
<dbReference type="PATRIC" id="fig|198214.7.peg.3331"/>
<dbReference type="HOGENOM" id="CLU_014689_8_2_6"/>
<dbReference type="Proteomes" id="UP000001006">
    <property type="component" value="Chromosome"/>
</dbReference>
<dbReference type="Proteomes" id="UP000002673">
    <property type="component" value="Chromosome"/>
</dbReference>
<dbReference type="GO" id="GO:0051539">
    <property type="term" value="F:4 iron, 4 sulfur cluster binding"/>
    <property type="evidence" value="ECO:0007669"/>
    <property type="project" value="UniProtKB-KW"/>
</dbReference>
<dbReference type="GO" id="GO:0005506">
    <property type="term" value="F:iron ion binding"/>
    <property type="evidence" value="ECO:0007669"/>
    <property type="project" value="UniProtKB-UniRule"/>
</dbReference>
<dbReference type="GO" id="GO:0003723">
    <property type="term" value="F:RNA binding"/>
    <property type="evidence" value="ECO:0007669"/>
    <property type="project" value="InterPro"/>
</dbReference>
<dbReference type="GO" id="GO:0070041">
    <property type="term" value="F:rRNA (uridine-C5-)-methyltransferase activity"/>
    <property type="evidence" value="ECO:0007669"/>
    <property type="project" value="UniProtKB-UniRule"/>
</dbReference>
<dbReference type="GO" id="GO:0070475">
    <property type="term" value="P:rRNA base methylation"/>
    <property type="evidence" value="ECO:0007669"/>
    <property type="project" value="TreeGrafter"/>
</dbReference>
<dbReference type="CDD" id="cd02440">
    <property type="entry name" value="AdoMet_MTases"/>
    <property type="match status" value="1"/>
</dbReference>
<dbReference type="FunFam" id="3.40.50.150:FF:000009">
    <property type="entry name" value="23S rRNA (Uracil(1939)-C(5))-methyltransferase RlmD"/>
    <property type="match status" value="1"/>
</dbReference>
<dbReference type="FunFam" id="2.40.50.1070:FF:000004">
    <property type="entry name" value="23S rRNA (uracil(1939)-C(5))-methyltransferase RlmD"/>
    <property type="match status" value="1"/>
</dbReference>
<dbReference type="FunFam" id="2.40.50.140:FF:000097">
    <property type="entry name" value="23S rRNA (uracil(1939)-C(5))-methyltransferase RlmD"/>
    <property type="match status" value="1"/>
</dbReference>
<dbReference type="Gene3D" id="2.40.50.1070">
    <property type="match status" value="1"/>
</dbReference>
<dbReference type="Gene3D" id="2.40.50.140">
    <property type="entry name" value="Nucleic acid-binding proteins"/>
    <property type="match status" value="1"/>
</dbReference>
<dbReference type="Gene3D" id="3.40.50.150">
    <property type="entry name" value="Vaccinia Virus protein VP39"/>
    <property type="match status" value="1"/>
</dbReference>
<dbReference type="HAMAP" id="MF_01010">
    <property type="entry name" value="23SrRNA_methyltr_RlmD"/>
    <property type="match status" value="1"/>
</dbReference>
<dbReference type="InterPro" id="IPR001566">
    <property type="entry name" value="23S_rRNA_MeTrfase_RlmD"/>
</dbReference>
<dbReference type="InterPro" id="IPR030390">
    <property type="entry name" value="MeTrfase_TrmA_AS"/>
</dbReference>
<dbReference type="InterPro" id="IPR030391">
    <property type="entry name" value="MeTrfase_TrmA_CS"/>
</dbReference>
<dbReference type="InterPro" id="IPR012340">
    <property type="entry name" value="NA-bd_OB-fold"/>
</dbReference>
<dbReference type="InterPro" id="IPR029063">
    <property type="entry name" value="SAM-dependent_MTases_sf"/>
</dbReference>
<dbReference type="InterPro" id="IPR002792">
    <property type="entry name" value="TRAM_dom"/>
</dbReference>
<dbReference type="InterPro" id="IPR010280">
    <property type="entry name" value="U5_MeTrfase_fam"/>
</dbReference>
<dbReference type="NCBIfam" id="NF009639">
    <property type="entry name" value="PRK13168.1"/>
    <property type="match status" value="1"/>
</dbReference>
<dbReference type="NCBIfam" id="TIGR00479">
    <property type="entry name" value="rumA"/>
    <property type="match status" value="1"/>
</dbReference>
<dbReference type="PANTHER" id="PTHR11061:SF49">
    <property type="entry name" value="23S RRNA (URACIL(1939)-C(5))-METHYLTRANSFERASE RLMD"/>
    <property type="match status" value="1"/>
</dbReference>
<dbReference type="PANTHER" id="PTHR11061">
    <property type="entry name" value="RNA M5U METHYLTRANSFERASE"/>
    <property type="match status" value="1"/>
</dbReference>
<dbReference type="Pfam" id="PF01938">
    <property type="entry name" value="TRAM"/>
    <property type="match status" value="1"/>
</dbReference>
<dbReference type="Pfam" id="PF05958">
    <property type="entry name" value="tRNA_U5-meth_tr"/>
    <property type="match status" value="1"/>
</dbReference>
<dbReference type="SUPFAM" id="SSF50249">
    <property type="entry name" value="Nucleic acid-binding proteins"/>
    <property type="match status" value="1"/>
</dbReference>
<dbReference type="SUPFAM" id="SSF53335">
    <property type="entry name" value="S-adenosyl-L-methionine-dependent methyltransferases"/>
    <property type="match status" value="1"/>
</dbReference>
<dbReference type="PROSITE" id="PS51687">
    <property type="entry name" value="SAM_MT_RNA_M5U"/>
    <property type="match status" value="1"/>
</dbReference>
<dbReference type="PROSITE" id="PS50926">
    <property type="entry name" value="TRAM"/>
    <property type="match status" value="1"/>
</dbReference>
<dbReference type="PROSITE" id="PS01230">
    <property type="entry name" value="TRMA_1"/>
    <property type="match status" value="1"/>
</dbReference>
<dbReference type="PROSITE" id="PS01231">
    <property type="entry name" value="TRMA_2"/>
    <property type="match status" value="1"/>
</dbReference>
<evidence type="ECO:0000250" key="1"/>
<evidence type="ECO:0000255" key="2">
    <source>
        <dbReference type="HAMAP-Rule" id="MF_01010"/>
    </source>
</evidence>
<accession>Q83QD5</accession>
<accession>Q7C078</accession>
<feature type="initiator methionine" description="Removed" evidence="1">
    <location>
        <position position="1"/>
    </location>
</feature>
<feature type="chain" id="PRO_0000161915" description="23S rRNA (uracil(1939)-C(5))-methyltransferase RlmD">
    <location>
        <begin position="2"/>
        <end position="433"/>
    </location>
</feature>
<feature type="domain" description="TRAM" evidence="2">
    <location>
        <begin position="10"/>
        <end position="68"/>
    </location>
</feature>
<feature type="active site" description="Nucleophile" evidence="2">
    <location>
        <position position="389"/>
    </location>
</feature>
<feature type="binding site" evidence="2">
    <location>
        <position position="81"/>
    </location>
    <ligand>
        <name>[4Fe-4S] cluster</name>
        <dbReference type="ChEBI" id="CHEBI:49883"/>
    </ligand>
</feature>
<feature type="binding site" evidence="2">
    <location>
        <position position="87"/>
    </location>
    <ligand>
        <name>[4Fe-4S] cluster</name>
        <dbReference type="ChEBI" id="CHEBI:49883"/>
    </ligand>
</feature>
<feature type="binding site" evidence="2">
    <location>
        <position position="90"/>
    </location>
    <ligand>
        <name>[4Fe-4S] cluster</name>
        <dbReference type="ChEBI" id="CHEBI:49883"/>
    </ligand>
</feature>
<feature type="binding site" evidence="2">
    <location>
        <position position="162"/>
    </location>
    <ligand>
        <name>[4Fe-4S] cluster</name>
        <dbReference type="ChEBI" id="CHEBI:49883"/>
    </ligand>
</feature>
<feature type="binding site" evidence="2">
    <location>
        <position position="265"/>
    </location>
    <ligand>
        <name>S-adenosyl-L-methionine</name>
        <dbReference type="ChEBI" id="CHEBI:59789"/>
    </ligand>
</feature>
<feature type="binding site" evidence="2">
    <location>
        <position position="294"/>
    </location>
    <ligand>
        <name>S-adenosyl-L-methionine</name>
        <dbReference type="ChEBI" id="CHEBI:59789"/>
    </ligand>
</feature>
<feature type="binding site" evidence="2">
    <location>
        <position position="299"/>
    </location>
    <ligand>
        <name>S-adenosyl-L-methionine</name>
        <dbReference type="ChEBI" id="CHEBI:59789"/>
    </ligand>
</feature>
<feature type="binding site" evidence="2">
    <location>
        <position position="315"/>
    </location>
    <ligand>
        <name>S-adenosyl-L-methionine</name>
        <dbReference type="ChEBI" id="CHEBI:59789"/>
    </ligand>
</feature>
<feature type="binding site" evidence="2">
    <location>
        <position position="342"/>
    </location>
    <ligand>
        <name>S-adenosyl-L-methionine</name>
        <dbReference type="ChEBI" id="CHEBI:59789"/>
    </ligand>
</feature>
<feature type="binding site" evidence="2">
    <location>
        <position position="363"/>
    </location>
    <ligand>
        <name>S-adenosyl-L-methionine</name>
        <dbReference type="ChEBI" id="CHEBI:59789"/>
    </ligand>
</feature>
<sequence>MAQFYSAKRRTTTRQIITVSVNDLDSFGQGVARHNGKTLFIPGLLPQENAEVAVTEDKKQYARAKVVRRLSDSPERETPRCPHFGVCGGCQQQHASVDLQQRSKSAALARLMKHDVSEVIADVPWGYRRRARLSLNYLPKTQQLQMGFRKAGSSDIVDVKQCPILAPQLEALLPKVRACLGSLQAMRHLGHVELVQATSGTLMILRHTAPLSSADREKLERFSHSEGLDLYLAPDSEILETVSGEMPWYDSNGLRLTFSPRDFIQVNAGVNQKMVARALEWLDVQPEDRVLDLFCGMGNFTLPLATQAASVVGVEGVPALVEKGQQNARLNGLQNVTFYHENLEEDVTKQPWAKNGFDKVLLDPARAGAAGVMQQIIKLEPIRIVYVSCNPATLARDSEALLKAGYTIARLAMLDMFPHTGHLESMVLFSRVK</sequence>
<name>RLMD_SHIFL</name>
<comment type="function">
    <text evidence="2">Catalyzes the formation of 5-methyl-uridine at position 1939 (m5U1939) in 23S rRNA.</text>
</comment>
<comment type="catalytic activity">
    <reaction evidence="2">
        <text>uridine(1939) in 23S rRNA + S-adenosyl-L-methionine = 5-methyluridine(1939) in 23S rRNA + S-adenosyl-L-homocysteine + H(+)</text>
        <dbReference type="Rhea" id="RHEA:42908"/>
        <dbReference type="Rhea" id="RHEA-COMP:10278"/>
        <dbReference type="Rhea" id="RHEA-COMP:10279"/>
        <dbReference type="ChEBI" id="CHEBI:15378"/>
        <dbReference type="ChEBI" id="CHEBI:57856"/>
        <dbReference type="ChEBI" id="CHEBI:59789"/>
        <dbReference type="ChEBI" id="CHEBI:65315"/>
        <dbReference type="ChEBI" id="CHEBI:74447"/>
        <dbReference type="EC" id="2.1.1.190"/>
    </reaction>
</comment>
<comment type="similarity">
    <text evidence="2">Belongs to the class I-like SAM-binding methyltransferase superfamily. RNA M5U methyltransferase family. RlmD subfamily.</text>
</comment>
<proteinExistence type="inferred from homology"/>